<gene>
    <name type="ordered locus">BCE_4227</name>
</gene>
<comment type="similarity">
    <text evidence="1">Belongs to the bacilliredoxin family.</text>
</comment>
<reference key="1">
    <citation type="journal article" date="2004" name="Nucleic Acids Res.">
        <title>The genome sequence of Bacillus cereus ATCC 10987 reveals metabolic adaptations and a large plasmid related to Bacillus anthracis pXO1.</title>
        <authorList>
            <person name="Rasko D.A."/>
            <person name="Ravel J."/>
            <person name="Oekstad O.A."/>
            <person name="Helgason E."/>
            <person name="Cer R.Z."/>
            <person name="Jiang L."/>
            <person name="Shores K.A."/>
            <person name="Fouts D.E."/>
            <person name="Tourasse N.J."/>
            <person name="Angiuoli S.V."/>
            <person name="Kolonay J.F."/>
            <person name="Nelson W.C."/>
            <person name="Kolstoe A.-B."/>
            <person name="Fraser C.M."/>
            <person name="Read T.D."/>
        </authorList>
    </citation>
    <scope>NUCLEOTIDE SEQUENCE [LARGE SCALE GENOMIC DNA]</scope>
    <source>
        <strain>ATCC 10987 / NRS 248</strain>
    </source>
</reference>
<feature type="chain" id="PRO_0000271976" description="Bacilliredoxin BCE_4227">
    <location>
        <begin position="1"/>
        <end position="144"/>
    </location>
</feature>
<sequence length="144" mass="16071">MINFNFFMNDVVRQAREEIVSAGYTELTTPEAVDEAFKRNGTTLVMVNSVCGCAGGIARPAAAHSVHYDKRPNHLVTVFAGQDKEATARAREYFEGYPPSSPSFALLKDGKIVTMVERHEIEGHEPMQVIAKLQSYFEENCEEL</sequence>
<dbReference type="EMBL" id="AE017194">
    <property type="protein sequence ID" value="AAS43128.1"/>
    <property type="molecule type" value="Genomic_DNA"/>
</dbReference>
<dbReference type="SMR" id="Q731D9"/>
<dbReference type="KEGG" id="bca:BCE_4227"/>
<dbReference type="HOGENOM" id="CLU_132521_0_0_9"/>
<dbReference type="Proteomes" id="UP000002527">
    <property type="component" value="Chromosome"/>
</dbReference>
<dbReference type="GO" id="GO:0045454">
    <property type="term" value="P:cell redox homeostasis"/>
    <property type="evidence" value="ECO:0000250"/>
    <property type="project" value="UniProtKB"/>
</dbReference>
<dbReference type="Gene3D" id="3.40.30.10">
    <property type="entry name" value="Glutaredoxin"/>
    <property type="match status" value="1"/>
</dbReference>
<dbReference type="InterPro" id="IPR009474">
    <property type="entry name" value="BrxB/BrxA"/>
</dbReference>
<dbReference type="NCBIfam" id="TIGR04191">
    <property type="entry name" value="YphP_YqiW"/>
    <property type="match status" value="1"/>
</dbReference>
<dbReference type="PANTHER" id="PTHR40052:SF1">
    <property type="entry name" value="BACILLIREDOXIN BRXB"/>
    <property type="match status" value="1"/>
</dbReference>
<dbReference type="PANTHER" id="PTHR40052">
    <property type="entry name" value="UPF0403 PROTEIN YQIW-RELATED"/>
    <property type="match status" value="1"/>
</dbReference>
<dbReference type="Pfam" id="PF06491">
    <property type="entry name" value="Disulph_isomer"/>
    <property type="match status" value="1"/>
</dbReference>
<protein>
    <recommendedName>
        <fullName evidence="1">Bacilliredoxin BCE_4227</fullName>
    </recommendedName>
</protein>
<organism>
    <name type="scientific">Bacillus cereus (strain ATCC 10987 / NRS 248)</name>
    <dbReference type="NCBI Taxonomy" id="222523"/>
    <lineage>
        <taxon>Bacteria</taxon>
        <taxon>Bacillati</taxon>
        <taxon>Bacillota</taxon>
        <taxon>Bacilli</taxon>
        <taxon>Bacillales</taxon>
        <taxon>Bacillaceae</taxon>
        <taxon>Bacillus</taxon>
        <taxon>Bacillus cereus group</taxon>
    </lineage>
</organism>
<accession>Q731D9</accession>
<proteinExistence type="inferred from homology"/>
<name>Y4227_BACC1</name>
<evidence type="ECO:0000305" key="1"/>